<proteinExistence type="inferred from homology"/>
<feature type="chain" id="PRO_0000151171" description="Undecaprenyl-diphosphatase">
    <location>
        <begin position="1"/>
        <end position="313"/>
    </location>
</feature>
<feature type="transmembrane region" description="Helical" evidence="1">
    <location>
        <begin position="121"/>
        <end position="141"/>
    </location>
</feature>
<feature type="transmembrane region" description="Helical" evidence="1">
    <location>
        <begin position="152"/>
        <end position="172"/>
    </location>
</feature>
<feature type="transmembrane region" description="Helical" evidence="1">
    <location>
        <begin position="187"/>
        <end position="207"/>
    </location>
</feature>
<feature type="transmembrane region" description="Helical" evidence="1">
    <location>
        <begin position="225"/>
        <end position="245"/>
    </location>
</feature>
<feature type="transmembrane region" description="Helical" evidence="1">
    <location>
        <begin position="259"/>
        <end position="279"/>
    </location>
</feature>
<feature type="transmembrane region" description="Helical" evidence="1">
    <location>
        <begin position="290"/>
        <end position="310"/>
    </location>
</feature>
<sequence>MGESMTWVQALVLGLVQGLTEFLPISSSAHLRIVSSVFFGEDAGASFTAVTQLGTEAAVLVYFAKDIWRILVAWTTTLWDKARAATGPRVPIHDRPTTRLPVLTADNEHRFAAEAQRELDYRIGWYVIIATIPIGVLGFLFKDEIRTGARNLWLVSFMLIAFALVIAAAEHYGAKRRPIEQLTTRDGLVMGFAQCLALIPGVSRSGATSSAGLFLGLEREAAVRFSFLLAIPAVTASGLFSLPDAFEPAGEGLNASGPQLLVATIVSFVVGYASVAWLLKFVARHSLNWFVGYRIVLGLVIMGLLGAGVISAT</sequence>
<accession>Q5YVL4</accession>
<comment type="function">
    <text evidence="1">Catalyzes the dephosphorylation of undecaprenyl diphosphate (UPP). Confers resistance to bacitracin.</text>
</comment>
<comment type="catalytic activity">
    <reaction evidence="1">
        <text>di-trans,octa-cis-undecaprenyl diphosphate + H2O = di-trans,octa-cis-undecaprenyl phosphate + phosphate + H(+)</text>
        <dbReference type="Rhea" id="RHEA:28094"/>
        <dbReference type="ChEBI" id="CHEBI:15377"/>
        <dbReference type="ChEBI" id="CHEBI:15378"/>
        <dbReference type="ChEBI" id="CHEBI:43474"/>
        <dbReference type="ChEBI" id="CHEBI:58405"/>
        <dbReference type="ChEBI" id="CHEBI:60392"/>
        <dbReference type="EC" id="3.6.1.27"/>
    </reaction>
</comment>
<comment type="subcellular location">
    <subcellularLocation>
        <location evidence="1">Cell membrane</location>
        <topology evidence="1">Multi-pass membrane protein</topology>
    </subcellularLocation>
</comment>
<comment type="miscellaneous">
    <text>Bacitracin is thought to be involved in the inhibition of peptidoglycan synthesis by sequestering undecaprenyl diphosphate, thereby reducing the pool of lipid carrier available.</text>
</comment>
<comment type="similarity">
    <text evidence="1">Belongs to the UppP family.</text>
</comment>
<gene>
    <name evidence="1" type="primary">uppP</name>
    <name type="ordered locus">NFA_29300</name>
</gene>
<dbReference type="EC" id="3.6.1.27" evidence="1"/>
<dbReference type="EMBL" id="AP006618">
    <property type="protein sequence ID" value="BAD57777.1"/>
    <property type="molecule type" value="Genomic_DNA"/>
</dbReference>
<dbReference type="SMR" id="Q5YVL4"/>
<dbReference type="STRING" id="247156.NFA_29300"/>
<dbReference type="KEGG" id="nfa:NFA_29300"/>
<dbReference type="eggNOG" id="COG1968">
    <property type="taxonomic scope" value="Bacteria"/>
</dbReference>
<dbReference type="HOGENOM" id="CLU_060296_1_0_11"/>
<dbReference type="Proteomes" id="UP000006820">
    <property type="component" value="Chromosome"/>
</dbReference>
<dbReference type="GO" id="GO:0005886">
    <property type="term" value="C:plasma membrane"/>
    <property type="evidence" value="ECO:0007669"/>
    <property type="project" value="UniProtKB-SubCell"/>
</dbReference>
<dbReference type="GO" id="GO:0050380">
    <property type="term" value="F:undecaprenyl-diphosphatase activity"/>
    <property type="evidence" value="ECO:0007669"/>
    <property type="project" value="UniProtKB-UniRule"/>
</dbReference>
<dbReference type="GO" id="GO:0071555">
    <property type="term" value="P:cell wall organization"/>
    <property type="evidence" value="ECO:0007669"/>
    <property type="project" value="UniProtKB-KW"/>
</dbReference>
<dbReference type="GO" id="GO:0009252">
    <property type="term" value="P:peptidoglycan biosynthetic process"/>
    <property type="evidence" value="ECO:0007669"/>
    <property type="project" value="UniProtKB-KW"/>
</dbReference>
<dbReference type="GO" id="GO:0008360">
    <property type="term" value="P:regulation of cell shape"/>
    <property type="evidence" value="ECO:0007669"/>
    <property type="project" value="UniProtKB-KW"/>
</dbReference>
<dbReference type="GO" id="GO:0046677">
    <property type="term" value="P:response to antibiotic"/>
    <property type="evidence" value="ECO:0007669"/>
    <property type="project" value="UniProtKB-UniRule"/>
</dbReference>
<dbReference type="HAMAP" id="MF_01006">
    <property type="entry name" value="Undec_diphosphatase"/>
    <property type="match status" value="1"/>
</dbReference>
<dbReference type="InterPro" id="IPR003824">
    <property type="entry name" value="UppP"/>
</dbReference>
<dbReference type="NCBIfam" id="NF001392">
    <property type="entry name" value="PRK00281.2-1"/>
    <property type="match status" value="1"/>
</dbReference>
<dbReference type="PANTHER" id="PTHR30622">
    <property type="entry name" value="UNDECAPRENYL-DIPHOSPHATASE"/>
    <property type="match status" value="1"/>
</dbReference>
<dbReference type="PANTHER" id="PTHR30622:SF4">
    <property type="entry name" value="UNDECAPRENYL-DIPHOSPHATASE"/>
    <property type="match status" value="1"/>
</dbReference>
<dbReference type="Pfam" id="PF02673">
    <property type="entry name" value="BacA"/>
    <property type="match status" value="1"/>
</dbReference>
<organism>
    <name type="scientific">Nocardia farcinica (strain IFM 10152)</name>
    <dbReference type="NCBI Taxonomy" id="247156"/>
    <lineage>
        <taxon>Bacteria</taxon>
        <taxon>Bacillati</taxon>
        <taxon>Actinomycetota</taxon>
        <taxon>Actinomycetes</taxon>
        <taxon>Mycobacteriales</taxon>
        <taxon>Nocardiaceae</taxon>
        <taxon>Nocardia</taxon>
    </lineage>
</organism>
<evidence type="ECO:0000255" key="1">
    <source>
        <dbReference type="HAMAP-Rule" id="MF_01006"/>
    </source>
</evidence>
<reference key="1">
    <citation type="journal article" date="2004" name="Proc. Natl. Acad. Sci. U.S.A.">
        <title>The complete genomic sequence of Nocardia farcinica IFM 10152.</title>
        <authorList>
            <person name="Ishikawa J."/>
            <person name="Yamashita A."/>
            <person name="Mikami Y."/>
            <person name="Hoshino Y."/>
            <person name="Kurita H."/>
            <person name="Hotta K."/>
            <person name="Shiba T."/>
            <person name="Hattori M."/>
        </authorList>
    </citation>
    <scope>NUCLEOTIDE SEQUENCE [LARGE SCALE GENOMIC DNA]</scope>
    <source>
        <strain>IFM 10152</strain>
    </source>
</reference>
<name>UPPP_NOCFA</name>
<protein>
    <recommendedName>
        <fullName evidence="1">Undecaprenyl-diphosphatase</fullName>
        <ecNumber evidence="1">3.6.1.27</ecNumber>
    </recommendedName>
    <alternativeName>
        <fullName evidence="1">Bacitracin resistance protein</fullName>
    </alternativeName>
    <alternativeName>
        <fullName evidence="1">Undecaprenyl pyrophosphate phosphatase</fullName>
    </alternativeName>
</protein>
<keyword id="KW-0046">Antibiotic resistance</keyword>
<keyword id="KW-1003">Cell membrane</keyword>
<keyword id="KW-0133">Cell shape</keyword>
<keyword id="KW-0961">Cell wall biogenesis/degradation</keyword>
<keyword id="KW-0378">Hydrolase</keyword>
<keyword id="KW-0472">Membrane</keyword>
<keyword id="KW-0573">Peptidoglycan synthesis</keyword>
<keyword id="KW-1185">Reference proteome</keyword>
<keyword id="KW-0812">Transmembrane</keyword>
<keyword id="KW-1133">Transmembrane helix</keyword>